<accession>B2I3C2</accession>
<name>CLPX_ACIBC</name>
<proteinExistence type="inferred from homology"/>
<comment type="function">
    <text evidence="1">ATP-dependent specificity component of the Clp protease. It directs the protease to specific substrates. Can perform chaperone functions in the absence of ClpP.</text>
</comment>
<comment type="subunit">
    <text evidence="1">Component of the ClpX-ClpP complex. Forms a hexameric ring that, in the presence of ATP, binds to fourteen ClpP subunits assembled into a disk-like structure with a central cavity, resembling the structure of eukaryotic proteasomes.</text>
</comment>
<comment type="similarity">
    <text evidence="1">Belongs to the ClpX chaperone family.</text>
</comment>
<reference key="1">
    <citation type="journal article" date="2008" name="Antimicrob. Agents Chemother.">
        <title>Whole-genome pyrosequencing of an epidemic multidrug-resistant Acinetobacter baumannii strain belonging to the European clone II group.</title>
        <authorList>
            <person name="Iacono M."/>
            <person name="Villa L."/>
            <person name="Fortini D."/>
            <person name="Bordoni R."/>
            <person name="Imperi F."/>
            <person name="Bonnal R.J."/>
            <person name="Sicheritz-Ponten T."/>
            <person name="De Bellis G."/>
            <person name="Visca P."/>
            <person name="Cassone A."/>
            <person name="Carattoli A."/>
        </authorList>
    </citation>
    <scope>NUCLEOTIDE SEQUENCE [LARGE SCALE GENOMIC DNA]</scope>
    <source>
        <strain>ACICU</strain>
    </source>
</reference>
<organism>
    <name type="scientific">Acinetobacter baumannii (strain ACICU)</name>
    <dbReference type="NCBI Taxonomy" id="405416"/>
    <lineage>
        <taxon>Bacteria</taxon>
        <taxon>Pseudomonadati</taxon>
        <taxon>Pseudomonadota</taxon>
        <taxon>Gammaproteobacteria</taxon>
        <taxon>Moraxellales</taxon>
        <taxon>Moraxellaceae</taxon>
        <taxon>Acinetobacter</taxon>
        <taxon>Acinetobacter calcoaceticus/baumannii complex</taxon>
    </lineage>
</organism>
<gene>
    <name evidence="1" type="primary">clpX</name>
    <name type="ordered locus">ACICU_00488</name>
</gene>
<evidence type="ECO:0000255" key="1">
    <source>
        <dbReference type="HAMAP-Rule" id="MF_00175"/>
    </source>
</evidence>
<evidence type="ECO:0000255" key="2">
    <source>
        <dbReference type="PROSITE-ProRule" id="PRU01250"/>
    </source>
</evidence>
<feature type="chain" id="PRO_1000097916" description="ATP-dependent Clp protease ATP-binding subunit ClpX">
    <location>
        <begin position="1"/>
        <end position="437"/>
    </location>
</feature>
<feature type="domain" description="ClpX-type ZB" evidence="2">
    <location>
        <begin position="1"/>
        <end position="52"/>
    </location>
</feature>
<feature type="binding site" evidence="2">
    <location>
        <position position="11"/>
    </location>
    <ligand>
        <name>Zn(2+)</name>
        <dbReference type="ChEBI" id="CHEBI:29105"/>
    </ligand>
</feature>
<feature type="binding site" evidence="2">
    <location>
        <position position="14"/>
    </location>
    <ligand>
        <name>Zn(2+)</name>
        <dbReference type="ChEBI" id="CHEBI:29105"/>
    </ligand>
</feature>
<feature type="binding site" evidence="2">
    <location>
        <position position="33"/>
    </location>
    <ligand>
        <name>Zn(2+)</name>
        <dbReference type="ChEBI" id="CHEBI:29105"/>
    </ligand>
</feature>
<feature type="binding site" evidence="2">
    <location>
        <position position="36"/>
    </location>
    <ligand>
        <name>Zn(2+)</name>
        <dbReference type="ChEBI" id="CHEBI:29105"/>
    </ligand>
</feature>
<feature type="binding site" evidence="1">
    <location>
        <begin position="119"/>
        <end position="126"/>
    </location>
    <ligand>
        <name>ATP</name>
        <dbReference type="ChEBI" id="CHEBI:30616"/>
    </ligand>
</feature>
<dbReference type="EMBL" id="CP000863">
    <property type="protein sequence ID" value="ACC55800.1"/>
    <property type="molecule type" value="Genomic_DNA"/>
</dbReference>
<dbReference type="RefSeq" id="WP_001289250.1">
    <property type="nucleotide sequence ID" value="NZ_CP031380.1"/>
</dbReference>
<dbReference type="SMR" id="B2I3C2"/>
<dbReference type="GeneID" id="92892482"/>
<dbReference type="KEGG" id="abc:ACICU_00488"/>
<dbReference type="HOGENOM" id="CLU_014218_8_2_6"/>
<dbReference type="Proteomes" id="UP000008839">
    <property type="component" value="Chromosome"/>
</dbReference>
<dbReference type="GO" id="GO:0009376">
    <property type="term" value="C:HslUV protease complex"/>
    <property type="evidence" value="ECO:0007669"/>
    <property type="project" value="TreeGrafter"/>
</dbReference>
<dbReference type="GO" id="GO:0005524">
    <property type="term" value="F:ATP binding"/>
    <property type="evidence" value="ECO:0007669"/>
    <property type="project" value="UniProtKB-UniRule"/>
</dbReference>
<dbReference type="GO" id="GO:0016887">
    <property type="term" value="F:ATP hydrolysis activity"/>
    <property type="evidence" value="ECO:0007669"/>
    <property type="project" value="InterPro"/>
</dbReference>
<dbReference type="GO" id="GO:0140662">
    <property type="term" value="F:ATP-dependent protein folding chaperone"/>
    <property type="evidence" value="ECO:0007669"/>
    <property type="project" value="InterPro"/>
</dbReference>
<dbReference type="GO" id="GO:0046983">
    <property type="term" value="F:protein dimerization activity"/>
    <property type="evidence" value="ECO:0007669"/>
    <property type="project" value="InterPro"/>
</dbReference>
<dbReference type="GO" id="GO:0051082">
    <property type="term" value="F:unfolded protein binding"/>
    <property type="evidence" value="ECO:0007669"/>
    <property type="project" value="UniProtKB-UniRule"/>
</dbReference>
<dbReference type="GO" id="GO:0008270">
    <property type="term" value="F:zinc ion binding"/>
    <property type="evidence" value="ECO:0007669"/>
    <property type="project" value="InterPro"/>
</dbReference>
<dbReference type="GO" id="GO:0051301">
    <property type="term" value="P:cell division"/>
    <property type="evidence" value="ECO:0007669"/>
    <property type="project" value="TreeGrafter"/>
</dbReference>
<dbReference type="GO" id="GO:0051603">
    <property type="term" value="P:proteolysis involved in protein catabolic process"/>
    <property type="evidence" value="ECO:0007669"/>
    <property type="project" value="TreeGrafter"/>
</dbReference>
<dbReference type="CDD" id="cd19497">
    <property type="entry name" value="RecA-like_ClpX"/>
    <property type="match status" value="1"/>
</dbReference>
<dbReference type="FunFam" id="1.10.8.60:FF:000002">
    <property type="entry name" value="ATP-dependent Clp protease ATP-binding subunit ClpX"/>
    <property type="match status" value="1"/>
</dbReference>
<dbReference type="FunFam" id="3.40.50.300:FF:000005">
    <property type="entry name" value="ATP-dependent Clp protease ATP-binding subunit ClpX"/>
    <property type="match status" value="1"/>
</dbReference>
<dbReference type="Gene3D" id="1.10.8.60">
    <property type="match status" value="1"/>
</dbReference>
<dbReference type="Gene3D" id="6.20.220.10">
    <property type="entry name" value="ClpX chaperone, C4-type zinc finger domain"/>
    <property type="match status" value="1"/>
</dbReference>
<dbReference type="Gene3D" id="3.40.50.300">
    <property type="entry name" value="P-loop containing nucleotide triphosphate hydrolases"/>
    <property type="match status" value="1"/>
</dbReference>
<dbReference type="HAMAP" id="MF_00175">
    <property type="entry name" value="ClpX"/>
    <property type="match status" value="1"/>
</dbReference>
<dbReference type="InterPro" id="IPR003593">
    <property type="entry name" value="AAA+_ATPase"/>
</dbReference>
<dbReference type="InterPro" id="IPR050052">
    <property type="entry name" value="ATP-dep_Clp_protease_ClpX"/>
</dbReference>
<dbReference type="InterPro" id="IPR003959">
    <property type="entry name" value="ATPase_AAA_core"/>
</dbReference>
<dbReference type="InterPro" id="IPR019489">
    <property type="entry name" value="Clp_ATPase_C"/>
</dbReference>
<dbReference type="InterPro" id="IPR004487">
    <property type="entry name" value="Clp_protease_ATP-bd_su_ClpX"/>
</dbReference>
<dbReference type="InterPro" id="IPR046425">
    <property type="entry name" value="ClpX_bact"/>
</dbReference>
<dbReference type="InterPro" id="IPR027417">
    <property type="entry name" value="P-loop_NTPase"/>
</dbReference>
<dbReference type="InterPro" id="IPR010603">
    <property type="entry name" value="Znf_CppX_C4"/>
</dbReference>
<dbReference type="InterPro" id="IPR038366">
    <property type="entry name" value="Znf_CppX_C4_sf"/>
</dbReference>
<dbReference type="NCBIfam" id="TIGR00382">
    <property type="entry name" value="clpX"/>
    <property type="match status" value="1"/>
</dbReference>
<dbReference type="NCBIfam" id="NF003745">
    <property type="entry name" value="PRK05342.1"/>
    <property type="match status" value="1"/>
</dbReference>
<dbReference type="PANTHER" id="PTHR48102:SF7">
    <property type="entry name" value="ATP-DEPENDENT CLP PROTEASE ATP-BINDING SUBUNIT CLPX-LIKE, MITOCHONDRIAL"/>
    <property type="match status" value="1"/>
</dbReference>
<dbReference type="PANTHER" id="PTHR48102">
    <property type="entry name" value="ATP-DEPENDENT CLP PROTEASE ATP-BINDING SUBUNIT CLPX-LIKE, MITOCHONDRIAL-RELATED"/>
    <property type="match status" value="1"/>
</dbReference>
<dbReference type="Pfam" id="PF07724">
    <property type="entry name" value="AAA_2"/>
    <property type="match status" value="1"/>
</dbReference>
<dbReference type="Pfam" id="PF10431">
    <property type="entry name" value="ClpB_D2-small"/>
    <property type="match status" value="1"/>
</dbReference>
<dbReference type="Pfam" id="PF06689">
    <property type="entry name" value="zf-C4_ClpX"/>
    <property type="match status" value="1"/>
</dbReference>
<dbReference type="SMART" id="SM00382">
    <property type="entry name" value="AAA"/>
    <property type="match status" value="1"/>
</dbReference>
<dbReference type="SMART" id="SM01086">
    <property type="entry name" value="ClpB_D2-small"/>
    <property type="match status" value="1"/>
</dbReference>
<dbReference type="SMART" id="SM00994">
    <property type="entry name" value="zf-C4_ClpX"/>
    <property type="match status" value="1"/>
</dbReference>
<dbReference type="SUPFAM" id="SSF57716">
    <property type="entry name" value="Glucocorticoid receptor-like (DNA-binding domain)"/>
    <property type="match status" value="1"/>
</dbReference>
<dbReference type="SUPFAM" id="SSF52540">
    <property type="entry name" value="P-loop containing nucleoside triphosphate hydrolases"/>
    <property type="match status" value="1"/>
</dbReference>
<dbReference type="PROSITE" id="PS51902">
    <property type="entry name" value="CLPX_ZB"/>
    <property type="match status" value="1"/>
</dbReference>
<keyword id="KW-0067">ATP-binding</keyword>
<keyword id="KW-0143">Chaperone</keyword>
<keyword id="KW-0479">Metal-binding</keyword>
<keyword id="KW-0547">Nucleotide-binding</keyword>
<keyword id="KW-0862">Zinc</keyword>
<sequence>MSEHPQGQKHCSFCGKTQSEVGKLIAGEDAYICNECVDVCLDLVQTSQQVEAGDWASKALPKPHEIRAALDQYVIGQDLAKKTLSVAVYNHYKRLKVGQSGHVSKDVEIAKSNILLIGPTGSGKTLLAQTLARLLDVPFAMADATTLTEAGYVGEDVENIVQKLLQKADYDVEKAQKGIIYIDEIDKITRKSENPSITRDVSGEGVQQALLKMIEGTVASIPPQGGRKHPQQEFIQIDTSNILFICGGAFAGLEKIVQQRQEKGGIGFTADVKNKDETKKLAELFRQVEPTDLVKFGLIPEFIGRLPVIATLEELDEEALMQILTEPKNALTRQYQYLFNMENVDLVFEDSALRAVAKRALERNTGARGLRSILENVLLETMYDLPSRTDVGTVFINEAVINGEAEPVYKSERQPKEAVTHESVAKADLKVIDSKSA</sequence>
<protein>
    <recommendedName>
        <fullName evidence="1">ATP-dependent Clp protease ATP-binding subunit ClpX</fullName>
    </recommendedName>
</protein>